<feature type="chain" id="PRO_0000154593" description="Large ribosomal subunit protein uL10">
    <location>
        <begin position="1"/>
        <end position="174"/>
    </location>
</feature>
<keyword id="KW-0687">Ribonucleoprotein</keyword>
<keyword id="KW-0689">Ribosomal protein</keyword>
<keyword id="KW-0694">RNA-binding</keyword>
<keyword id="KW-0699">rRNA-binding</keyword>
<gene>
    <name evidence="1" type="primary">rplJ</name>
    <name type="ordered locus">BB0012</name>
</gene>
<dbReference type="EMBL" id="BX640437">
    <property type="protein sequence ID" value="CAE30514.1"/>
    <property type="molecule type" value="Genomic_DNA"/>
</dbReference>
<dbReference type="RefSeq" id="WP_003806888.1">
    <property type="nucleotide sequence ID" value="NC_002927.3"/>
</dbReference>
<dbReference type="SMR" id="Q7WRE1"/>
<dbReference type="GeneID" id="93206241"/>
<dbReference type="KEGG" id="bbr:BB0012"/>
<dbReference type="eggNOG" id="COG0244">
    <property type="taxonomic scope" value="Bacteria"/>
</dbReference>
<dbReference type="HOGENOM" id="CLU_092227_0_1_4"/>
<dbReference type="Proteomes" id="UP000001027">
    <property type="component" value="Chromosome"/>
</dbReference>
<dbReference type="GO" id="GO:0015934">
    <property type="term" value="C:large ribosomal subunit"/>
    <property type="evidence" value="ECO:0007669"/>
    <property type="project" value="InterPro"/>
</dbReference>
<dbReference type="GO" id="GO:0070180">
    <property type="term" value="F:large ribosomal subunit rRNA binding"/>
    <property type="evidence" value="ECO:0007669"/>
    <property type="project" value="UniProtKB-UniRule"/>
</dbReference>
<dbReference type="GO" id="GO:0003735">
    <property type="term" value="F:structural constituent of ribosome"/>
    <property type="evidence" value="ECO:0007669"/>
    <property type="project" value="InterPro"/>
</dbReference>
<dbReference type="GO" id="GO:0006412">
    <property type="term" value="P:translation"/>
    <property type="evidence" value="ECO:0007669"/>
    <property type="project" value="UniProtKB-UniRule"/>
</dbReference>
<dbReference type="CDD" id="cd05797">
    <property type="entry name" value="Ribosomal_L10"/>
    <property type="match status" value="1"/>
</dbReference>
<dbReference type="Gene3D" id="3.30.70.1730">
    <property type="match status" value="1"/>
</dbReference>
<dbReference type="Gene3D" id="6.10.250.290">
    <property type="match status" value="1"/>
</dbReference>
<dbReference type="HAMAP" id="MF_00362">
    <property type="entry name" value="Ribosomal_uL10"/>
    <property type="match status" value="1"/>
</dbReference>
<dbReference type="InterPro" id="IPR001790">
    <property type="entry name" value="Ribosomal_uL10"/>
</dbReference>
<dbReference type="InterPro" id="IPR043141">
    <property type="entry name" value="Ribosomal_uL10-like_sf"/>
</dbReference>
<dbReference type="InterPro" id="IPR022973">
    <property type="entry name" value="Ribosomal_uL10_bac"/>
</dbReference>
<dbReference type="InterPro" id="IPR047865">
    <property type="entry name" value="Ribosomal_uL10_bac_type"/>
</dbReference>
<dbReference type="InterPro" id="IPR002363">
    <property type="entry name" value="Ribosomal_uL10_CS_bac"/>
</dbReference>
<dbReference type="NCBIfam" id="NF000955">
    <property type="entry name" value="PRK00099.1-1"/>
    <property type="match status" value="1"/>
</dbReference>
<dbReference type="PANTHER" id="PTHR11560">
    <property type="entry name" value="39S RIBOSOMAL PROTEIN L10, MITOCHONDRIAL"/>
    <property type="match status" value="1"/>
</dbReference>
<dbReference type="Pfam" id="PF00466">
    <property type="entry name" value="Ribosomal_L10"/>
    <property type="match status" value="1"/>
</dbReference>
<dbReference type="SUPFAM" id="SSF160369">
    <property type="entry name" value="Ribosomal protein L10-like"/>
    <property type="match status" value="1"/>
</dbReference>
<dbReference type="PROSITE" id="PS01109">
    <property type="entry name" value="RIBOSOMAL_L10"/>
    <property type="match status" value="1"/>
</dbReference>
<organism>
    <name type="scientific">Bordetella bronchiseptica (strain ATCC BAA-588 / NCTC 13252 / RB50)</name>
    <name type="common">Alcaligenes bronchisepticus</name>
    <dbReference type="NCBI Taxonomy" id="257310"/>
    <lineage>
        <taxon>Bacteria</taxon>
        <taxon>Pseudomonadati</taxon>
        <taxon>Pseudomonadota</taxon>
        <taxon>Betaproteobacteria</taxon>
        <taxon>Burkholderiales</taxon>
        <taxon>Alcaligenaceae</taxon>
        <taxon>Bordetella</taxon>
    </lineage>
</organism>
<name>RL10_BORBR</name>
<comment type="function">
    <text evidence="1">Forms part of the ribosomal stalk, playing a central role in the interaction of the ribosome with GTP-bound translation factors.</text>
</comment>
<comment type="subunit">
    <text evidence="1">Part of the ribosomal stalk of the 50S ribosomal subunit. The N-terminus interacts with L11 and the large rRNA to form the base of the stalk. The C-terminus forms an elongated spine to which L12 dimers bind in a sequential fashion forming a multimeric L10(L12)X complex.</text>
</comment>
<comment type="similarity">
    <text evidence="1">Belongs to the universal ribosomal protein uL10 family.</text>
</comment>
<accession>Q7WRE1</accession>
<sequence>MSLNRQEKAVVIEEVSAQVAKAQSIVIAEYRGLDVASVTVLRKTARESGVYLRVLKNTLVRRAVAGTAFEPLSEQLTGPLIYGISADPVAAAKVLAGFAKSNDKLVIKAGSLPNSLLTQDGVKALATMPSREELLSKLLGTMQAPIAQFVRTLNEVPTKFARGLAAVRDQKAAA</sequence>
<reference key="1">
    <citation type="journal article" date="2003" name="Nat. Genet.">
        <title>Comparative analysis of the genome sequences of Bordetella pertussis, Bordetella parapertussis and Bordetella bronchiseptica.</title>
        <authorList>
            <person name="Parkhill J."/>
            <person name="Sebaihia M."/>
            <person name="Preston A."/>
            <person name="Murphy L.D."/>
            <person name="Thomson N.R."/>
            <person name="Harris D.E."/>
            <person name="Holden M.T.G."/>
            <person name="Churcher C.M."/>
            <person name="Bentley S.D."/>
            <person name="Mungall K.L."/>
            <person name="Cerdeno-Tarraga A.-M."/>
            <person name="Temple L."/>
            <person name="James K.D."/>
            <person name="Harris B."/>
            <person name="Quail M.A."/>
            <person name="Achtman M."/>
            <person name="Atkin R."/>
            <person name="Baker S."/>
            <person name="Basham D."/>
            <person name="Bason N."/>
            <person name="Cherevach I."/>
            <person name="Chillingworth T."/>
            <person name="Collins M."/>
            <person name="Cronin A."/>
            <person name="Davis P."/>
            <person name="Doggett J."/>
            <person name="Feltwell T."/>
            <person name="Goble A."/>
            <person name="Hamlin N."/>
            <person name="Hauser H."/>
            <person name="Holroyd S."/>
            <person name="Jagels K."/>
            <person name="Leather S."/>
            <person name="Moule S."/>
            <person name="Norberczak H."/>
            <person name="O'Neil S."/>
            <person name="Ormond D."/>
            <person name="Price C."/>
            <person name="Rabbinowitsch E."/>
            <person name="Rutter S."/>
            <person name="Sanders M."/>
            <person name="Saunders D."/>
            <person name="Seeger K."/>
            <person name="Sharp S."/>
            <person name="Simmonds M."/>
            <person name="Skelton J."/>
            <person name="Squares R."/>
            <person name="Squares S."/>
            <person name="Stevens K."/>
            <person name="Unwin L."/>
            <person name="Whitehead S."/>
            <person name="Barrell B.G."/>
            <person name="Maskell D.J."/>
        </authorList>
    </citation>
    <scope>NUCLEOTIDE SEQUENCE [LARGE SCALE GENOMIC DNA]</scope>
    <source>
        <strain>ATCC BAA-588 / NCTC 13252 / RB50</strain>
    </source>
</reference>
<protein>
    <recommendedName>
        <fullName evidence="1">Large ribosomal subunit protein uL10</fullName>
    </recommendedName>
    <alternativeName>
        <fullName evidence="2">50S ribosomal protein L10</fullName>
    </alternativeName>
</protein>
<evidence type="ECO:0000255" key="1">
    <source>
        <dbReference type="HAMAP-Rule" id="MF_00362"/>
    </source>
</evidence>
<evidence type="ECO:0000305" key="2"/>
<proteinExistence type="inferred from homology"/>